<accession>B0KM36</accession>
<gene>
    <name evidence="1" type="primary">ubiE</name>
    <name type="ordered locus">PputGB1_5061</name>
</gene>
<sequence length="256" mass="28484">MNDQRKGDHAEPTTHFGYQDVPESQKAKKVAEVFHSVAAKYDLMNDVLSGGMHRLWKRFTIELSGVRSGNRVLDIAGGTGDLAAKFSRLVGPTGQVVLADINDSMLKVGRDRLLDRGVAGNIEFVQADAEKLPFPDNHFDCVTIAFGLRNVTHKDEAIRSMLRVLKPGGRLLILEFSKPTNKLMSRAYDAYSFAFMPLAGKLITNDAESYRYLAESIRMHPDQETLKSMMVEAGFDRVTYHNMTSGIVAVHRGIKP</sequence>
<name>UBIE_PSEPG</name>
<comment type="function">
    <text evidence="1">Methyltransferase required for the conversion of demethylmenaquinol (DMKH2) to menaquinol (MKH2) and the conversion of 2-polyprenyl-6-methoxy-1,4-benzoquinol (DDMQH2) to 2-polyprenyl-3-methyl-6-methoxy-1,4-benzoquinol (DMQH2).</text>
</comment>
<comment type="catalytic activity">
    <reaction evidence="1">
        <text>a 2-demethylmenaquinol + S-adenosyl-L-methionine = a menaquinol + S-adenosyl-L-homocysteine + H(+)</text>
        <dbReference type="Rhea" id="RHEA:42640"/>
        <dbReference type="Rhea" id="RHEA-COMP:9539"/>
        <dbReference type="Rhea" id="RHEA-COMP:9563"/>
        <dbReference type="ChEBI" id="CHEBI:15378"/>
        <dbReference type="ChEBI" id="CHEBI:18151"/>
        <dbReference type="ChEBI" id="CHEBI:55437"/>
        <dbReference type="ChEBI" id="CHEBI:57856"/>
        <dbReference type="ChEBI" id="CHEBI:59789"/>
        <dbReference type="EC" id="2.1.1.163"/>
    </reaction>
</comment>
<comment type="catalytic activity">
    <reaction evidence="1">
        <text>a 2-methoxy-6-(all-trans-polyprenyl)benzene-1,4-diol + S-adenosyl-L-methionine = a 5-methoxy-2-methyl-3-(all-trans-polyprenyl)benzene-1,4-diol + S-adenosyl-L-homocysteine + H(+)</text>
        <dbReference type="Rhea" id="RHEA:28286"/>
        <dbReference type="Rhea" id="RHEA-COMP:10858"/>
        <dbReference type="Rhea" id="RHEA-COMP:10859"/>
        <dbReference type="ChEBI" id="CHEBI:15378"/>
        <dbReference type="ChEBI" id="CHEBI:57856"/>
        <dbReference type="ChEBI" id="CHEBI:59789"/>
        <dbReference type="ChEBI" id="CHEBI:84166"/>
        <dbReference type="ChEBI" id="CHEBI:84167"/>
        <dbReference type="EC" id="2.1.1.201"/>
    </reaction>
</comment>
<comment type="pathway">
    <text evidence="1">Quinol/quinone metabolism; menaquinone biosynthesis; menaquinol from 1,4-dihydroxy-2-naphthoate: step 2/2.</text>
</comment>
<comment type="pathway">
    <text evidence="1">Cofactor biosynthesis; ubiquinone biosynthesis.</text>
</comment>
<comment type="similarity">
    <text evidence="1">Belongs to the class I-like SAM-binding methyltransferase superfamily. MenG/UbiE family.</text>
</comment>
<keyword id="KW-0474">Menaquinone biosynthesis</keyword>
<keyword id="KW-0489">Methyltransferase</keyword>
<keyword id="KW-0949">S-adenosyl-L-methionine</keyword>
<keyword id="KW-0808">Transferase</keyword>
<keyword id="KW-0831">Ubiquinone biosynthesis</keyword>
<evidence type="ECO:0000255" key="1">
    <source>
        <dbReference type="HAMAP-Rule" id="MF_01813"/>
    </source>
</evidence>
<evidence type="ECO:0000256" key="2">
    <source>
        <dbReference type="SAM" id="MobiDB-lite"/>
    </source>
</evidence>
<proteinExistence type="inferred from homology"/>
<protein>
    <recommendedName>
        <fullName evidence="1">Ubiquinone/menaquinone biosynthesis C-methyltransferase UbiE</fullName>
        <ecNumber evidence="1">2.1.1.163</ecNumber>
        <ecNumber evidence="1">2.1.1.201</ecNumber>
    </recommendedName>
    <alternativeName>
        <fullName evidence="1">2-methoxy-6-polyprenyl-1,4-benzoquinol methylase</fullName>
    </alternativeName>
    <alternativeName>
        <fullName evidence="1">Demethylmenaquinone methyltransferase</fullName>
    </alternativeName>
</protein>
<feature type="chain" id="PRO_1000088288" description="Ubiquinone/menaquinone biosynthesis C-methyltransferase UbiE">
    <location>
        <begin position="1"/>
        <end position="256"/>
    </location>
</feature>
<feature type="region of interest" description="Disordered" evidence="2">
    <location>
        <begin position="1"/>
        <end position="23"/>
    </location>
</feature>
<feature type="compositionally biased region" description="Basic and acidic residues" evidence="2">
    <location>
        <begin position="1"/>
        <end position="12"/>
    </location>
</feature>
<feature type="binding site" evidence="1">
    <location>
        <position position="79"/>
    </location>
    <ligand>
        <name>S-adenosyl-L-methionine</name>
        <dbReference type="ChEBI" id="CHEBI:59789"/>
    </ligand>
</feature>
<feature type="binding site" evidence="1">
    <location>
        <position position="100"/>
    </location>
    <ligand>
        <name>S-adenosyl-L-methionine</name>
        <dbReference type="ChEBI" id="CHEBI:59789"/>
    </ligand>
</feature>
<feature type="binding site" evidence="1">
    <location>
        <begin position="128"/>
        <end position="129"/>
    </location>
    <ligand>
        <name>S-adenosyl-L-methionine</name>
        <dbReference type="ChEBI" id="CHEBI:59789"/>
    </ligand>
</feature>
<reference key="1">
    <citation type="submission" date="2008-01" db="EMBL/GenBank/DDBJ databases">
        <title>Complete sequence of Pseudomonas putida GB-1.</title>
        <authorList>
            <consortium name="US DOE Joint Genome Institute"/>
            <person name="Copeland A."/>
            <person name="Lucas S."/>
            <person name="Lapidus A."/>
            <person name="Barry K."/>
            <person name="Glavina del Rio T."/>
            <person name="Dalin E."/>
            <person name="Tice H."/>
            <person name="Pitluck S."/>
            <person name="Bruce D."/>
            <person name="Goodwin L."/>
            <person name="Chertkov O."/>
            <person name="Brettin T."/>
            <person name="Detter J.C."/>
            <person name="Han C."/>
            <person name="Kuske C.R."/>
            <person name="Schmutz J."/>
            <person name="Larimer F."/>
            <person name="Land M."/>
            <person name="Hauser L."/>
            <person name="Kyrpides N."/>
            <person name="Kim E."/>
            <person name="McCarthy J.K."/>
            <person name="Richardson P."/>
        </authorList>
    </citation>
    <scope>NUCLEOTIDE SEQUENCE [LARGE SCALE GENOMIC DNA]</scope>
    <source>
        <strain>GB-1</strain>
    </source>
</reference>
<organism>
    <name type="scientific">Pseudomonas putida (strain GB-1)</name>
    <dbReference type="NCBI Taxonomy" id="76869"/>
    <lineage>
        <taxon>Bacteria</taxon>
        <taxon>Pseudomonadati</taxon>
        <taxon>Pseudomonadota</taxon>
        <taxon>Gammaproteobacteria</taxon>
        <taxon>Pseudomonadales</taxon>
        <taxon>Pseudomonadaceae</taxon>
        <taxon>Pseudomonas</taxon>
    </lineage>
</organism>
<dbReference type="EC" id="2.1.1.163" evidence="1"/>
<dbReference type="EC" id="2.1.1.201" evidence="1"/>
<dbReference type="EMBL" id="CP000926">
    <property type="protein sequence ID" value="ABZ00946.1"/>
    <property type="molecule type" value="Genomic_DNA"/>
</dbReference>
<dbReference type="RefSeq" id="WP_012274568.1">
    <property type="nucleotide sequence ID" value="NC_010322.1"/>
</dbReference>
<dbReference type="SMR" id="B0KM36"/>
<dbReference type="KEGG" id="ppg:PputGB1_5061"/>
<dbReference type="eggNOG" id="COG2226">
    <property type="taxonomic scope" value="Bacteria"/>
</dbReference>
<dbReference type="HOGENOM" id="CLU_037990_0_0_6"/>
<dbReference type="UniPathway" id="UPA00079">
    <property type="reaction ID" value="UER00169"/>
</dbReference>
<dbReference type="UniPathway" id="UPA00232"/>
<dbReference type="Proteomes" id="UP000002157">
    <property type="component" value="Chromosome"/>
</dbReference>
<dbReference type="GO" id="GO:0008425">
    <property type="term" value="F:2-methoxy-6-polyprenyl-1,4-benzoquinol methyltransferase activity"/>
    <property type="evidence" value="ECO:0007669"/>
    <property type="project" value="UniProtKB-UniRule"/>
</dbReference>
<dbReference type="GO" id="GO:0043770">
    <property type="term" value="F:demethylmenaquinone methyltransferase activity"/>
    <property type="evidence" value="ECO:0007669"/>
    <property type="project" value="UniProtKB-UniRule"/>
</dbReference>
<dbReference type="GO" id="GO:0009060">
    <property type="term" value="P:aerobic respiration"/>
    <property type="evidence" value="ECO:0007669"/>
    <property type="project" value="UniProtKB-UniRule"/>
</dbReference>
<dbReference type="GO" id="GO:0009234">
    <property type="term" value="P:menaquinone biosynthetic process"/>
    <property type="evidence" value="ECO:0007669"/>
    <property type="project" value="UniProtKB-UniRule"/>
</dbReference>
<dbReference type="GO" id="GO:0032259">
    <property type="term" value="P:methylation"/>
    <property type="evidence" value="ECO:0007669"/>
    <property type="project" value="UniProtKB-KW"/>
</dbReference>
<dbReference type="CDD" id="cd02440">
    <property type="entry name" value="AdoMet_MTases"/>
    <property type="match status" value="1"/>
</dbReference>
<dbReference type="FunFam" id="3.40.50.150:FF:000014">
    <property type="entry name" value="Ubiquinone/menaquinone biosynthesis C-methyltransferase UbiE"/>
    <property type="match status" value="1"/>
</dbReference>
<dbReference type="Gene3D" id="3.40.50.150">
    <property type="entry name" value="Vaccinia Virus protein VP39"/>
    <property type="match status" value="1"/>
</dbReference>
<dbReference type="HAMAP" id="MF_01813">
    <property type="entry name" value="MenG_UbiE_methyltr"/>
    <property type="match status" value="1"/>
</dbReference>
<dbReference type="InterPro" id="IPR029063">
    <property type="entry name" value="SAM-dependent_MTases_sf"/>
</dbReference>
<dbReference type="InterPro" id="IPR004033">
    <property type="entry name" value="UbiE/COQ5_MeTrFase"/>
</dbReference>
<dbReference type="InterPro" id="IPR023576">
    <property type="entry name" value="UbiE/COQ5_MeTrFase_CS"/>
</dbReference>
<dbReference type="NCBIfam" id="TIGR01934">
    <property type="entry name" value="MenG_MenH_UbiE"/>
    <property type="match status" value="1"/>
</dbReference>
<dbReference type="NCBIfam" id="NF001240">
    <property type="entry name" value="PRK00216.1-1"/>
    <property type="match status" value="1"/>
</dbReference>
<dbReference type="NCBIfam" id="NF001244">
    <property type="entry name" value="PRK00216.1-5"/>
    <property type="match status" value="1"/>
</dbReference>
<dbReference type="PANTHER" id="PTHR43591:SF24">
    <property type="entry name" value="2-METHOXY-6-POLYPRENYL-1,4-BENZOQUINOL METHYLASE, MITOCHONDRIAL"/>
    <property type="match status" value="1"/>
</dbReference>
<dbReference type="PANTHER" id="PTHR43591">
    <property type="entry name" value="METHYLTRANSFERASE"/>
    <property type="match status" value="1"/>
</dbReference>
<dbReference type="Pfam" id="PF01209">
    <property type="entry name" value="Ubie_methyltran"/>
    <property type="match status" value="1"/>
</dbReference>
<dbReference type="SUPFAM" id="SSF53335">
    <property type="entry name" value="S-adenosyl-L-methionine-dependent methyltransferases"/>
    <property type="match status" value="1"/>
</dbReference>
<dbReference type="PROSITE" id="PS51608">
    <property type="entry name" value="SAM_MT_UBIE"/>
    <property type="match status" value="1"/>
</dbReference>
<dbReference type="PROSITE" id="PS01183">
    <property type="entry name" value="UBIE_1"/>
    <property type="match status" value="1"/>
</dbReference>
<dbReference type="PROSITE" id="PS01184">
    <property type="entry name" value="UBIE_2"/>
    <property type="match status" value="1"/>
</dbReference>